<dbReference type="EMBL" id="AY393999">
    <property type="protein sequence ID" value="AAQ93383.1"/>
    <property type="molecule type" value="mRNA"/>
</dbReference>
<dbReference type="EMBL" id="BC078944">
    <property type="protein sequence ID" value="AAH78944.1"/>
    <property type="molecule type" value="mRNA"/>
</dbReference>
<dbReference type="RefSeq" id="NP_954546.1">
    <property type="nucleotide sequence ID" value="NM_199115.2"/>
</dbReference>
<dbReference type="RefSeq" id="XP_038935346.1">
    <property type="nucleotide sequence ID" value="XM_039079418.2"/>
</dbReference>
<dbReference type="RefSeq" id="XP_038935347.1">
    <property type="nucleotide sequence ID" value="XM_039079419.2"/>
</dbReference>
<dbReference type="SMR" id="Q6TMA8"/>
<dbReference type="FunCoup" id="Q6TMA8">
    <property type="interactions" value="476"/>
</dbReference>
<dbReference type="STRING" id="10116.ENSRNOP00000010031"/>
<dbReference type="GlyCosmos" id="Q6TMA8">
    <property type="glycosylation" value="3 sites, No reported glycans"/>
</dbReference>
<dbReference type="GlyGen" id="Q6TMA8">
    <property type="glycosylation" value="3 sites"/>
</dbReference>
<dbReference type="PhosphoSitePlus" id="Q6TMA8"/>
<dbReference type="PaxDb" id="10116-ENSRNOP00000010031"/>
<dbReference type="Ensembl" id="ENSRNOT00000010031.7">
    <property type="protein sequence ID" value="ENSRNOP00000010031.3"/>
    <property type="gene ID" value="ENSRNOG00000007545.7"/>
</dbReference>
<dbReference type="GeneID" id="362850"/>
<dbReference type="KEGG" id="rno:362850"/>
<dbReference type="UCSC" id="RGD:735058">
    <property type="organism name" value="rat"/>
</dbReference>
<dbReference type="AGR" id="RGD:735058"/>
<dbReference type="CTD" id="51129"/>
<dbReference type="RGD" id="735058">
    <property type="gene designation" value="Angptl4"/>
</dbReference>
<dbReference type="eggNOG" id="KOG2579">
    <property type="taxonomic scope" value="Eukaryota"/>
</dbReference>
<dbReference type="GeneTree" id="ENSGT00940000159478"/>
<dbReference type="HOGENOM" id="CLU_038628_2_1_1"/>
<dbReference type="InParanoid" id="Q6TMA8"/>
<dbReference type="OMA" id="MATGFPF"/>
<dbReference type="OrthoDB" id="6145874at2759"/>
<dbReference type="PhylomeDB" id="Q6TMA8"/>
<dbReference type="TreeFam" id="TF329953"/>
<dbReference type="Reactome" id="R-RNO-8963889">
    <property type="pathway name" value="Assembly of active LPL and LIPC lipase complexes"/>
</dbReference>
<dbReference type="Reactome" id="R-RNO-9762292">
    <property type="pathway name" value="Regulation of CDH11 function"/>
</dbReference>
<dbReference type="PRO" id="PR:Q6TMA8"/>
<dbReference type="Proteomes" id="UP000002494">
    <property type="component" value="Chromosome 7"/>
</dbReference>
<dbReference type="Bgee" id="ENSRNOG00000007545">
    <property type="expression patterns" value="Expressed in liver and 18 other cell types or tissues"/>
</dbReference>
<dbReference type="GO" id="GO:0062023">
    <property type="term" value="C:collagen-containing extracellular matrix"/>
    <property type="evidence" value="ECO:0000318"/>
    <property type="project" value="GO_Central"/>
</dbReference>
<dbReference type="GO" id="GO:0005576">
    <property type="term" value="C:extracellular region"/>
    <property type="evidence" value="ECO:0000266"/>
    <property type="project" value="RGD"/>
</dbReference>
<dbReference type="GO" id="GO:0005615">
    <property type="term" value="C:extracellular space"/>
    <property type="evidence" value="ECO:0000266"/>
    <property type="project" value="RGD"/>
</dbReference>
<dbReference type="GO" id="GO:0004857">
    <property type="term" value="F:enzyme inhibitor activity"/>
    <property type="evidence" value="ECO:0000266"/>
    <property type="project" value="RGD"/>
</dbReference>
<dbReference type="GO" id="GO:0042802">
    <property type="term" value="F:identical protein binding"/>
    <property type="evidence" value="ECO:0000353"/>
    <property type="project" value="RGD"/>
</dbReference>
<dbReference type="GO" id="GO:0035473">
    <property type="term" value="F:lipase binding"/>
    <property type="evidence" value="ECO:0007669"/>
    <property type="project" value="Ensembl"/>
</dbReference>
<dbReference type="GO" id="GO:0055102">
    <property type="term" value="F:lipase inhibitor activity"/>
    <property type="evidence" value="ECO:0007669"/>
    <property type="project" value="Ensembl"/>
</dbReference>
<dbReference type="GO" id="GO:0001525">
    <property type="term" value="P:angiogenesis"/>
    <property type="evidence" value="ECO:0007669"/>
    <property type="project" value="UniProtKB-KW"/>
</dbReference>
<dbReference type="GO" id="GO:0007596">
    <property type="term" value="P:blood coagulation"/>
    <property type="evidence" value="ECO:0007669"/>
    <property type="project" value="InterPro"/>
</dbReference>
<dbReference type="GO" id="GO:0072577">
    <property type="term" value="P:endothelial cell apoptotic process"/>
    <property type="evidence" value="ECO:0000266"/>
    <property type="project" value="RGD"/>
</dbReference>
<dbReference type="GO" id="GO:0006629">
    <property type="term" value="P:lipid metabolic process"/>
    <property type="evidence" value="ECO:0007669"/>
    <property type="project" value="UniProtKB-KW"/>
</dbReference>
<dbReference type="GO" id="GO:0043066">
    <property type="term" value="P:negative regulation of apoptotic process"/>
    <property type="evidence" value="ECO:0000266"/>
    <property type="project" value="RGD"/>
</dbReference>
<dbReference type="GO" id="GO:2000352">
    <property type="term" value="P:negative regulation of endothelial cell apoptotic process"/>
    <property type="evidence" value="ECO:0000266"/>
    <property type="project" value="RGD"/>
</dbReference>
<dbReference type="GO" id="GO:0045717">
    <property type="term" value="P:negative regulation of fatty acid biosynthetic process"/>
    <property type="evidence" value="ECO:0007669"/>
    <property type="project" value="Ensembl"/>
</dbReference>
<dbReference type="GO" id="GO:0010903">
    <property type="term" value="P:negative regulation of very-low-density lipoprotein particle remodeling"/>
    <property type="evidence" value="ECO:0007669"/>
    <property type="project" value="Ensembl"/>
</dbReference>
<dbReference type="GO" id="GO:0043335">
    <property type="term" value="P:protein unfolding"/>
    <property type="evidence" value="ECO:0000266"/>
    <property type="project" value="RGD"/>
</dbReference>
<dbReference type="GO" id="GO:0090318">
    <property type="term" value="P:regulation of chylomicron remodeling"/>
    <property type="evidence" value="ECO:0007669"/>
    <property type="project" value="Ensembl"/>
</dbReference>
<dbReference type="GO" id="GO:0019216">
    <property type="term" value="P:regulation of lipid metabolic process"/>
    <property type="evidence" value="ECO:0000304"/>
    <property type="project" value="RGD"/>
</dbReference>
<dbReference type="GO" id="GO:0001666">
    <property type="term" value="P:response to hypoxia"/>
    <property type="evidence" value="ECO:0000270"/>
    <property type="project" value="RGD"/>
</dbReference>
<dbReference type="GO" id="GO:0070328">
    <property type="term" value="P:triglyceride homeostasis"/>
    <property type="evidence" value="ECO:0000266"/>
    <property type="project" value="RGD"/>
</dbReference>
<dbReference type="CDD" id="cd00087">
    <property type="entry name" value="FReD"/>
    <property type="match status" value="1"/>
</dbReference>
<dbReference type="FunFam" id="4.10.530.10:FF:000001">
    <property type="entry name" value="angiopoietin-2 isoform X1"/>
    <property type="match status" value="1"/>
</dbReference>
<dbReference type="Gene3D" id="3.90.215.10">
    <property type="entry name" value="Gamma Fibrinogen, chain A, domain 1"/>
    <property type="match status" value="1"/>
</dbReference>
<dbReference type="Gene3D" id="4.10.530.10">
    <property type="entry name" value="Gamma-fibrinogen Carboxyl Terminal Fragment, domain 2"/>
    <property type="match status" value="1"/>
</dbReference>
<dbReference type="InterPro" id="IPR037579">
    <property type="entry name" value="FIB_ANG-like"/>
</dbReference>
<dbReference type="InterPro" id="IPR036056">
    <property type="entry name" value="Fibrinogen-like_C"/>
</dbReference>
<dbReference type="InterPro" id="IPR014716">
    <property type="entry name" value="Fibrinogen_a/b/g_C_1"/>
</dbReference>
<dbReference type="InterPro" id="IPR002181">
    <property type="entry name" value="Fibrinogen_a/b/g_C_dom"/>
</dbReference>
<dbReference type="InterPro" id="IPR020837">
    <property type="entry name" value="Fibrinogen_CS"/>
</dbReference>
<dbReference type="PANTHER" id="PTHR47221">
    <property type="entry name" value="FIBRINOGEN ALPHA CHAIN"/>
    <property type="match status" value="1"/>
</dbReference>
<dbReference type="PANTHER" id="PTHR47221:SF6">
    <property type="entry name" value="FIBRINOGEN ALPHA CHAIN"/>
    <property type="match status" value="1"/>
</dbReference>
<dbReference type="Pfam" id="PF00147">
    <property type="entry name" value="Fibrinogen_C"/>
    <property type="match status" value="1"/>
</dbReference>
<dbReference type="SMART" id="SM00186">
    <property type="entry name" value="FBG"/>
    <property type="match status" value="1"/>
</dbReference>
<dbReference type="SUPFAM" id="SSF56496">
    <property type="entry name" value="Fibrinogen C-terminal domain-like"/>
    <property type="match status" value="1"/>
</dbReference>
<dbReference type="PROSITE" id="PS00514">
    <property type="entry name" value="FIBRINOGEN_C_1"/>
    <property type="match status" value="1"/>
</dbReference>
<dbReference type="PROSITE" id="PS51406">
    <property type="entry name" value="FIBRINOGEN_C_2"/>
    <property type="match status" value="1"/>
</dbReference>
<reference key="1">
    <citation type="journal article" date="2004" name="J. Biol. Chem.">
        <title>Oligomerization and regulated proteolytic processing of angiopoietin-like protein 4.</title>
        <authorList>
            <person name="Ge H."/>
            <person name="Yang G."/>
            <person name="Huang L."/>
            <person name="Motola D.L."/>
            <person name="Pourbahrami T."/>
            <person name="Li C."/>
        </authorList>
    </citation>
    <scope>NUCLEOTIDE SEQUENCE [MRNA]</scope>
    <scope>SUBUNIT</scope>
    <scope>SUBCELLULAR LOCATION</scope>
    <scope>GLYCOSYLATION</scope>
    <source>
        <strain>Wistar</strain>
        <tissue>Adipose tissue</tissue>
    </source>
</reference>
<reference key="2">
    <citation type="journal article" date="2004" name="Genome Res.">
        <title>The status, quality, and expansion of the NIH full-length cDNA project: the Mammalian Gene Collection (MGC).</title>
        <authorList>
            <consortium name="The MGC Project Team"/>
        </authorList>
    </citation>
    <scope>NUCLEOTIDE SEQUENCE [LARGE SCALE MRNA]</scope>
    <source>
        <tissue>Kidney</tissue>
    </source>
</reference>
<evidence type="ECO:0000250" key="1">
    <source>
        <dbReference type="UniProtKB" id="Q9BY76"/>
    </source>
</evidence>
<evidence type="ECO:0000250" key="2">
    <source>
        <dbReference type="UniProtKB" id="Q9Z1P8"/>
    </source>
</evidence>
<evidence type="ECO:0000255" key="3"/>
<evidence type="ECO:0000255" key="4">
    <source>
        <dbReference type="PROSITE-ProRule" id="PRU00739"/>
    </source>
</evidence>
<evidence type="ECO:0000269" key="5">
    <source>
    </source>
</evidence>
<evidence type="ECO:0000305" key="6">
    <source>
    </source>
</evidence>
<feature type="signal peptide" evidence="3">
    <location>
        <begin position="1"/>
        <end position="23"/>
    </location>
</feature>
<feature type="chain" id="PRO_0000009126" description="Angiopoietin-related protein 4">
    <location>
        <begin position="24"/>
        <end position="405"/>
    </location>
</feature>
<feature type="chain" id="PRO_0000446865" description="ANGPTL4 N-terminal chain">
    <location>
        <begin position="24"/>
        <end position="163"/>
    </location>
</feature>
<feature type="chain" id="PRO_0000446866" description="ANGPTL4 C-terminal chain">
    <location>
        <begin position="164"/>
        <end position="405"/>
    </location>
</feature>
<feature type="domain" description="Fibrinogen C-terminal" evidence="4">
    <location>
        <begin position="178"/>
        <end position="400"/>
    </location>
</feature>
<feature type="coiled-coil region" evidence="3">
    <location>
        <begin position="54"/>
        <end position="146"/>
    </location>
</feature>
<feature type="site" description="Cleavage" evidence="1">
    <location>
        <begin position="163"/>
        <end position="164"/>
    </location>
</feature>
<feature type="glycosylation site" description="N-linked (GlcNAc...) asparagine" evidence="3">
    <location>
        <position position="176"/>
    </location>
</feature>
<feature type="glycosylation site" description="N-linked (GlcNAc...) asparagine" evidence="3">
    <location>
        <position position="231"/>
    </location>
</feature>
<feature type="glycosylation site" description="N-linked (GlcNAc...) asparagine" evidence="3">
    <location>
        <position position="237"/>
    </location>
</feature>
<feature type="disulfide bond" evidence="4">
    <location>
        <begin position="187"/>
        <end position="215"/>
    </location>
</feature>
<feature type="disulfide bond" evidence="4">
    <location>
        <begin position="340"/>
        <end position="353"/>
    </location>
</feature>
<keyword id="KW-0037">Angiogenesis</keyword>
<keyword id="KW-0175">Coiled coil</keyword>
<keyword id="KW-1015">Disulfide bond</keyword>
<keyword id="KW-0272">Extracellular matrix</keyword>
<keyword id="KW-0325">Glycoprotein</keyword>
<keyword id="KW-0443">Lipid metabolism</keyword>
<keyword id="KW-1185">Reference proteome</keyword>
<keyword id="KW-0964">Secreted</keyword>
<keyword id="KW-0732">Signal</keyword>
<organism>
    <name type="scientific">Rattus norvegicus</name>
    <name type="common">Rat</name>
    <dbReference type="NCBI Taxonomy" id="10116"/>
    <lineage>
        <taxon>Eukaryota</taxon>
        <taxon>Metazoa</taxon>
        <taxon>Chordata</taxon>
        <taxon>Craniata</taxon>
        <taxon>Vertebrata</taxon>
        <taxon>Euteleostomi</taxon>
        <taxon>Mammalia</taxon>
        <taxon>Eutheria</taxon>
        <taxon>Euarchontoglires</taxon>
        <taxon>Glires</taxon>
        <taxon>Rodentia</taxon>
        <taxon>Myomorpha</taxon>
        <taxon>Muroidea</taxon>
        <taxon>Muridae</taxon>
        <taxon>Murinae</taxon>
        <taxon>Rattus</taxon>
    </lineage>
</organism>
<gene>
    <name type="primary">Angptl4</name>
</gene>
<sequence>MRCAPTAGAALVLCAATAGLLSAQGRPAQPEPPRFASWDEMNLLAHGLLQLGHGLREHVERTRGQLGALERRMAACGNACQGPKGTDPKDRVPEGQAPETLQSLQTQLKAQNSKIQQLFQKVAQQQRYLSKQNLRIQNLQSQIDLLTPTHLDNGVDKTSRGKRLPKMAQLIGLTPNATRLHRPPRDCQELFQEGERHSGLFQIQPLGSPPFLVNCEMTSDGGWTVIQRRLNGSVDFNQSWEAYKDGFGDPQGEFWLGLEKMHSITGDRGSQLAVQLQDWDGNAKLLQFPIHLGGEDTAYSLQLTEPTANELGATNVSPNGLSLPFSTWDQDHDLRGDLNCAKSLSGGWWFGTCSHSNLNGQYFHSIPRQRQQRKKGIFWKTWKGRYYPLQATTLLIQPMEATAAS</sequence>
<accession>Q6TMA8</accession>
<name>ANGL4_RAT</name>
<comment type="function">
    <text evidence="1 2">Mediates inactivation of the lipoprotein lipase LPL, and thereby plays a role in the regulation of triglyceride clearance from the blood serum and in lipid metabolism. May also play a role in regulating glucose homeostasis and insulin sensitivity. Inhibits proliferation, migration, and tubule formation of endothelial cells and reduces vascular leakage (By similarity). Upon heterologous expression, inhibits the adhesion of endothelial cell to the extracellular matrix (ECM), and inhibits the reorganization of the actin cytoskeleton, formation of actin stress fibers and focal adhesions in endothelial cells that have adhered to ANGPTL4-containing ECM (in vitro) (By similarity). Depending on context, may modulate tumor-related angiogenesis (By similarity).</text>
</comment>
<comment type="function">
    <molecule>ANGPTL4 N-terminal chain</molecule>
    <text evidence="1">Mediates inactivation of the lipoprotein lipase LPL, and thereby plays an important role in the regulation of triglyceride clearance from the blood serum and in lipid metabolism. Has higher activity in LPL inactivation than the uncleaved protein.</text>
</comment>
<comment type="subunit">
    <text evidence="1 5">Homooligomer; disulfide-linked via Cys residues in the N-terminal part of the protein. The homooligomer undergoes proteolytic processing to release its carboxyl fibrinogen-like domain, which circulates as a monomer (PubMed:14570927). The homooligomer unprocessed form is able to interact with the extracellular matrix (By similarity).</text>
</comment>
<comment type="subcellular location">
    <subcellularLocation>
        <location evidence="5">Secreted</location>
    </subcellularLocation>
    <subcellularLocation>
        <location evidence="1">Secreted</location>
        <location evidence="1">Extracellular space</location>
        <location evidence="1">Extracellular matrix</location>
    </subcellularLocation>
    <text evidence="1">The unprocessed form interacts with the extracellular matrix. This may constitute a dynamic reservoir, a regulatory mechanism of the bioavailability of ANGPTL4.</text>
</comment>
<comment type="PTM">
    <text evidence="5">N-glycosylated.</text>
</comment>
<comment type="PTM">
    <molecule>ANGPTL4 N-terminal chain</molecule>
    <text evidence="5">Forms disulfide-linked dimers and tetramers.</text>
</comment>
<comment type="PTM">
    <text evidence="6">Cleaved into a smaller N-terminal chain and a larger chain that contains the fibrinogen C-terminal domain; both cleaved and uncleaved forms are detected in the extracellular space. The cleaved form is not present within the cell.</text>
</comment>
<protein>
    <recommendedName>
        <fullName>Angiopoietin-related protein 4</fullName>
    </recommendedName>
    <alternativeName>
        <fullName>Angiopoietin-like protein 4</fullName>
    </alternativeName>
    <alternativeName>
        <fullName>Hepatic fibrinogen/angiopoietin-related protein</fullName>
        <shortName>HFARP</shortName>
    </alternativeName>
    <component>
        <recommendedName>
            <fullName>ANGPTL4 N-terminal chain</fullName>
        </recommendedName>
    </component>
    <component>
        <recommendedName>
            <fullName>ANGPTL4 C-terminal chain</fullName>
        </recommendedName>
    </component>
</protein>
<proteinExistence type="evidence at protein level"/>